<feature type="chain" id="PRO_0000454881" description="Mitogen-activated protein kinase mpkA">
    <location>
        <begin position="1"/>
        <end position="424"/>
    </location>
</feature>
<feature type="domain" description="Protein kinase" evidence="1">
    <location>
        <begin position="23"/>
        <end position="314"/>
    </location>
</feature>
<feature type="region of interest" description="Disordered" evidence="4">
    <location>
        <begin position="375"/>
        <end position="424"/>
    </location>
</feature>
<feature type="active site" description="Proton acceptor" evidence="2">
    <location>
        <position position="149"/>
    </location>
</feature>
<feature type="binding site" evidence="1">
    <location>
        <begin position="29"/>
        <end position="37"/>
    </location>
    <ligand>
        <name>ATP</name>
        <dbReference type="ChEBI" id="CHEBI:30616"/>
    </ligand>
</feature>
<feature type="binding site" evidence="1">
    <location>
        <position position="52"/>
    </location>
    <ligand>
        <name>ATP</name>
        <dbReference type="ChEBI" id="CHEBI:30616"/>
    </ligand>
</feature>
<proteinExistence type="evidence at protein level"/>
<protein>
    <recommendedName>
        <fullName evidence="11">Mitogen-activated protein kinase mpkA</fullName>
        <shortName evidence="11">MAPK mpkA</shortName>
        <ecNumber evidence="12">2.7.11.24</ecNumber>
    </recommendedName>
</protein>
<accession>B0Y4X4</accession>
<dbReference type="EC" id="2.7.11.24" evidence="12"/>
<dbReference type="EMBL" id="DS499598">
    <property type="protein sequence ID" value="EDP50723.1"/>
    <property type="molecule type" value="Genomic_DNA"/>
</dbReference>
<dbReference type="SMR" id="B0Y4X4"/>
<dbReference type="EnsemblFungi" id="EDP50723">
    <property type="protein sequence ID" value="EDP50723"/>
    <property type="gene ID" value="AFUB_070630"/>
</dbReference>
<dbReference type="VEuPathDB" id="FungiDB:AFUB_070630"/>
<dbReference type="HOGENOM" id="CLU_000288_181_1_1"/>
<dbReference type="OrthoDB" id="47018at5052"/>
<dbReference type="PhylomeDB" id="B0Y4X4"/>
<dbReference type="Proteomes" id="UP000001699">
    <property type="component" value="Unassembled WGS sequence"/>
</dbReference>
<dbReference type="GO" id="GO:0005737">
    <property type="term" value="C:cytoplasm"/>
    <property type="evidence" value="ECO:0007669"/>
    <property type="project" value="EnsemblFungi"/>
</dbReference>
<dbReference type="GO" id="GO:0005634">
    <property type="term" value="C:nucleus"/>
    <property type="evidence" value="ECO:0007669"/>
    <property type="project" value="UniProtKB-SubCell"/>
</dbReference>
<dbReference type="GO" id="GO:0005524">
    <property type="term" value="F:ATP binding"/>
    <property type="evidence" value="ECO:0007669"/>
    <property type="project" value="UniProtKB-KW"/>
</dbReference>
<dbReference type="GO" id="GO:0004707">
    <property type="term" value="F:MAP kinase activity"/>
    <property type="evidence" value="ECO:0007669"/>
    <property type="project" value="UniProtKB-EC"/>
</dbReference>
<dbReference type="GO" id="GO:0106310">
    <property type="term" value="F:protein serine kinase activity"/>
    <property type="evidence" value="ECO:0007669"/>
    <property type="project" value="RHEA"/>
</dbReference>
<dbReference type="GO" id="GO:0000196">
    <property type="term" value="P:cell integrity MAPK cascade"/>
    <property type="evidence" value="ECO:0007669"/>
    <property type="project" value="EnsemblFungi"/>
</dbReference>
<dbReference type="GO" id="GO:1902660">
    <property type="term" value="P:negative regulation of glucose mediated signaling pathway"/>
    <property type="evidence" value="ECO:0007669"/>
    <property type="project" value="EnsemblFungi"/>
</dbReference>
<dbReference type="GO" id="GO:1902413">
    <property type="term" value="P:negative regulation of mitotic cytokinesis"/>
    <property type="evidence" value="ECO:0007669"/>
    <property type="project" value="EnsemblFungi"/>
</dbReference>
<dbReference type="GO" id="GO:1905665">
    <property type="term" value="P:positive regulation of calcium ion import across plasma membrane"/>
    <property type="evidence" value="ECO:0007669"/>
    <property type="project" value="EnsemblFungi"/>
</dbReference>
<dbReference type="GO" id="GO:0050850">
    <property type="term" value="P:positive regulation of calcium-mediated signaling"/>
    <property type="evidence" value="ECO:0007669"/>
    <property type="project" value="EnsemblFungi"/>
</dbReference>
<dbReference type="GO" id="GO:0032995">
    <property type="term" value="P:regulation of fungal-type cell wall biogenesis"/>
    <property type="evidence" value="ECO:0007669"/>
    <property type="project" value="EnsemblFungi"/>
</dbReference>
<dbReference type="CDD" id="cd07857">
    <property type="entry name" value="STKc_MPK1"/>
    <property type="match status" value="1"/>
</dbReference>
<dbReference type="FunFam" id="1.10.510.10:FF:000013">
    <property type="entry name" value="Mitogen-activated protein kinase"/>
    <property type="match status" value="1"/>
</dbReference>
<dbReference type="FunFam" id="3.30.200.20:FF:000157">
    <property type="entry name" value="Mitogen-activated protein kinase"/>
    <property type="match status" value="1"/>
</dbReference>
<dbReference type="Gene3D" id="3.30.200.20">
    <property type="entry name" value="Phosphorylase Kinase, domain 1"/>
    <property type="match status" value="1"/>
</dbReference>
<dbReference type="Gene3D" id="1.10.510.10">
    <property type="entry name" value="Transferase(Phosphotransferase) domain 1"/>
    <property type="match status" value="1"/>
</dbReference>
<dbReference type="InterPro" id="IPR011009">
    <property type="entry name" value="Kinase-like_dom_sf"/>
</dbReference>
<dbReference type="InterPro" id="IPR050117">
    <property type="entry name" value="MAP_kinase"/>
</dbReference>
<dbReference type="InterPro" id="IPR003527">
    <property type="entry name" value="MAP_kinase_CS"/>
</dbReference>
<dbReference type="InterPro" id="IPR000719">
    <property type="entry name" value="Prot_kinase_dom"/>
</dbReference>
<dbReference type="InterPro" id="IPR017441">
    <property type="entry name" value="Protein_kinase_ATP_BS"/>
</dbReference>
<dbReference type="InterPro" id="IPR008271">
    <property type="entry name" value="Ser/Thr_kinase_AS"/>
</dbReference>
<dbReference type="PANTHER" id="PTHR24055">
    <property type="entry name" value="MITOGEN-ACTIVATED PROTEIN KINASE"/>
    <property type="match status" value="1"/>
</dbReference>
<dbReference type="Pfam" id="PF00069">
    <property type="entry name" value="Pkinase"/>
    <property type="match status" value="1"/>
</dbReference>
<dbReference type="SMART" id="SM00220">
    <property type="entry name" value="S_TKc"/>
    <property type="match status" value="1"/>
</dbReference>
<dbReference type="SUPFAM" id="SSF56112">
    <property type="entry name" value="Protein kinase-like (PK-like)"/>
    <property type="match status" value="1"/>
</dbReference>
<dbReference type="PROSITE" id="PS01351">
    <property type="entry name" value="MAPK"/>
    <property type="match status" value="1"/>
</dbReference>
<dbReference type="PROSITE" id="PS00107">
    <property type="entry name" value="PROTEIN_KINASE_ATP"/>
    <property type="match status" value="1"/>
</dbReference>
<dbReference type="PROSITE" id="PS50011">
    <property type="entry name" value="PROTEIN_KINASE_DOM"/>
    <property type="match status" value="1"/>
</dbReference>
<dbReference type="PROSITE" id="PS00108">
    <property type="entry name" value="PROTEIN_KINASE_ST"/>
    <property type="match status" value="1"/>
</dbReference>
<sequence>MSDLQGRKVFKVFNQDFIVDERYNVTKELGQGAYGIVCAATNVHTGEGVAIKKVTNVFSKKILAKRALREIKLLQHFRGHRNITCLYDMDIPRPDNFNETYLYEELMECDLAAIIRSGQPLTDAHFQSFIYQILCGLKYIHSANVLHRDLKPGNLLVNADCELKICDFGLARGFSIDPEENAGYMTEYVATRWYRAPEIMLSFQSYTKAIDVWSVGCILAELLGGRPFFKGRDYVDQLNQILHYLGTPNEETLSRIGSPRAQEYVRNLPFMPKIPFQRLFPNANPDALDLLDRMLAFDPASRISVEEALEHPYLHIWHDASDEPTCPTTFDFHFEVVDDVQEMRKMIYDEVVRFRNLVRQQSQAQAAAAAQQQQQQIAQQTNVPIPDHQQGGWKQEEPKPQEVHAAGGHVNDLESSLQRGMDVQ</sequence>
<keyword id="KW-0067">ATP-binding</keyword>
<keyword id="KW-0418">Kinase</keyword>
<keyword id="KW-0460">Magnesium</keyword>
<keyword id="KW-0547">Nucleotide-binding</keyword>
<keyword id="KW-0539">Nucleus</keyword>
<keyword id="KW-0723">Serine/threonine-protein kinase</keyword>
<keyword id="KW-0808">Transferase</keyword>
<name>MPKA_ASPFC</name>
<gene>
    <name evidence="11" type="primary">mpkA</name>
    <name type="ORF">AFUB_070630</name>
</gene>
<reference key="1">
    <citation type="journal article" date="2008" name="PLoS Genet.">
        <title>Genomic islands in the pathogenic filamentous fungus Aspergillus fumigatus.</title>
        <authorList>
            <person name="Fedorova N.D."/>
            <person name="Khaldi N."/>
            <person name="Joardar V.S."/>
            <person name="Maiti R."/>
            <person name="Amedeo P."/>
            <person name="Anderson M.J."/>
            <person name="Crabtree J."/>
            <person name="Silva J.C."/>
            <person name="Badger J.H."/>
            <person name="Albarraq A."/>
            <person name="Angiuoli S."/>
            <person name="Bussey H."/>
            <person name="Bowyer P."/>
            <person name="Cotty P.J."/>
            <person name="Dyer P.S."/>
            <person name="Egan A."/>
            <person name="Galens K."/>
            <person name="Fraser-Liggett C.M."/>
            <person name="Haas B.J."/>
            <person name="Inman J.M."/>
            <person name="Kent R."/>
            <person name="Lemieux S."/>
            <person name="Malavazi I."/>
            <person name="Orvis J."/>
            <person name="Roemer T."/>
            <person name="Ronning C.M."/>
            <person name="Sundaram J.P."/>
            <person name="Sutton G."/>
            <person name="Turner G."/>
            <person name="Venter J.C."/>
            <person name="White O.R."/>
            <person name="Whitty B.R."/>
            <person name="Youngman P."/>
            <person name="Wolfe K.H."/>
            <person name="Goldman G.H."/>
            <person name="Wortman J.R."/>
            <person name="Jiang B."/>
            <person name="Denning D.W."/>
            <person name="Nierman W.C."/>
        </authorList>
    </citation>
    <scope>NUCLEOTIDE SEQUENCE [LARGE SCALE GENOMIC DNA]</scope>
    <source>
        <strain>CBS 144.89 / FGSC A1163 / CEA10</strain>
    </source>
</reference>
<reference key="2">
    <citation type="journal article" date="2008" name="Fungal Genet. Biol.">
        <title>The mitogen-activated protein kinase MpkA of Aspergillus fumigatus regulates cell wall signaling and oxidative stress response.</title>
        <authorList>
            <person name="Valiante V."/>
            <person name="Heinekamp T."/>
            <person name="Jain R."/>
            <person name="Haertl A."/>
            <person name="Brakhage A.A."/>
        </authorList>
    </citation>
    <scope>FUNCTION</scope>
    <scope>DISRUPTION PHENOTYPE</scope>
    <scope>PHOSPHORYLATION</scope>
    <scope>INDUCTION</scope>
</reference>
<reference key="3">
    <citation type="journal article" date="2009" name="Fungal Genet. Biol.">
        <title>The MpkA MAP kinase module regulates cell wall integrity signaling and pyomelanin formation in Aspergillus fumigatus.</title>
        <authorList>
            <person name="Valiante V."/>
            <person name="Jain R."/>
            <person name="Heinekamp T."/>
            <person name="Brakhage A.A."/>
        </authorList>
    </citation>
    <scope>FUNCTION</scope>
    <scope>DISRUPTION PHENOTYPE</scope>
    <scope>INDUCTION</scope>
</reference>
<reference key="4">
    <citation type="journal article" date="2011" name="Mol. Microbiol.">
        <title>The MAP kinase MpkA controls cell wall integrity, oxidative stress response, gliotoxin production and iron adaptation in Aspergillus fumigatus.</title>
        <authorList>
            <person name="Jain R."/>
            <person name="Valiante V."/>
            <person name="Remme N."/>
            <person name="Docimo T."/>
            <person name="Heinekamp T."/>
            <person name="Hertweck C."/>
            <person name="Gershenzon J."/>
            <person name="Haas H."/>
            <person name="Brakhage A.A."/>
        </authorList>
    </citation>
    <scope>FUNCTION</scope>
    <scope>DISRUPTION PHENOTYPE</scope>
    <scope>PHOSPHORYLATION</scope>
    <scope>SUBCELLULAR LOCATION</scope>
</reference>
<reference key="5">
    <citation type="journal article" date="2016" name="Mol. Microbiol.">
        <title>Mitogen activated protein kinases SakA(HOG1) and MpkC collaborate for Aspergillus fumigatus virulence.</title>
        <authorList>
            <person name="Bruder Nascimento A.C."/>
            <person name="Dos Reis T.F."/>
            <person name="de Castro P.A."/>
            <person name="Hori J.I."/>
            <person name="Bom V.L."/>
            <person name="de Assis L.J."/>
            <person name="Ramalho L.N."/>
            <person name="Rocha M.C."/>
            <person name="Malavazi I."/>
            <person name="Brown N.A."/>
            <person name="Valiante V."/>
            <person name="Brakhage A.A."/>
            <person name="Hagiwara D."/>
            <person name="Goldman G.H."/>
        </authorList>
    </citation>
    <scope>PHOSPHORYLATION</scope>
</reference>
<reference key="6">
    <citation type="journal article" date="2019" name="MBio">
        <title>Mitogen-activated protein kinase cross-talk interaction modulates the production of melanins in Aspergillus fumigatus.</title>
        <authorList>
            <person name="Manfiolli A.O."/>
            <person name="Siqueira F.S."/>
            <person name="Dos Reis T.F."/>
            <person name="Van Dijck P."/>
            <person name="Schrevens S."/>
            <person name="Hoefgen S."/>
            <person name="Foege M."/>
            <person name="Strassburger M."/>
            <person name="de Assis L.J."/>
            <person name="Heinekamp T."/>
            <person name="Rocha M.C."/>
            <person name="Janevska S."/>
            <person name="Brakhage A.A."/>
            <person name="Malavazi I."/>
            <person name="Goldman G.H."/>
            <person name="Valiante V."/>
        </authorList>
    </citation>
    <scope>FUNCTION</scope>
</reference>
<reference key="7">
    <citation type="journal article" date="2021" name="Genetics">
        <title>Transcriptional control of the production of Aspergillus fumigatus conidia-borne secondary metabolite fumiquinazoline C important for phagocytosis protection.</title>
        <authorList>
            <person name="Rocha M.C."/>
            <person name="Fabri J.H.T.M."/>
            <person name="da Silva L.P."/>
            <person name="Angolini C.F.F."/>
            <person name="Bertolini M.C."/>
            <person name="da Cunha A.F."/>
            <person name="Valiante V."/>
            <person name="Goldman G.H."/>
            <person name="Fill T.P."/>
            <person name="Malavazi I."/>
        </authorList>
    </citation>
    <scope>FUNCTION</scope>
    <scope>DISRUPTION PHENOTYPE</scope>
    <scope>INTERACTION WITH FMQA AND FMQC</scope>
</reference>
<comment type="function">
    <text evidence="5 6 7 9 10">Mitogen-activated kinase (MAPK), part of the cell wall integrity (CWI) signaling pathway composed by three protein kinases bck1, mkk2 and mpkA and responsible for the maintaining of cell-wall integrity balance (PubMed:17981060, PubMed:19715768). The CWI pathway also regulates the oxidative stress response, as well as the production of some secondary metabolites including gliotoxin, pyomelanin, pseurotin A, fumiquinazoline C or dihydroxynaphthalene (DHN)-melanin (PubMed:19715768, PubMed:21883519, PubMed:30914505, PubMed:33705521). MpkA directly phosphorylates the fumiquinazoline C biosynthesis cluster nonribosomal peptide synthetase fmqC during conidiation (PubMed:33705521). Mpka is also required for adaptation to iron starvation and regulates the expression of genes involved in siderophore biosynthesis in a hapX/sreA-independent manner (PubMed:21883519).</text>
</comment>
<comment type="catalytic activity">
    <reaction evidence="12">
        <text>L-seryl-[protein] + ATP = O-phospho-L-seryl-[protein] + ADP + H(+)</text>
        <dbReference type="Rhea" id="RHEA:17989"/>
        <dbReference type="Rhea" id="RHEA-COMP:9863"/>
        <dbReference type="Rhea" id="RHEA-COMP:11604"/>
        <dbReference type="ChEBI" id="CHEBI:15378"/>
        <dbReference type="ChEBI" id="CHEBI:29999"/>
        <dbReference type="ChEBI" id="CHEBI:30616"/>
        <dbReference type="ChEBI" id="CHEBI:83421"/>
        <dbReference type="ChEBI" id="CHEBI:456216"/>
        <dbReference type="EC" id="2.7.11.24"/>
    </reaction>
    <physiologicalReaction direction="left-to-right" evidence="12">
        <dbReference type="Rhea" id="RHEA:17990"/>
    </physiologicalReaction>
</comment>
<comment type="catalytic activity">
    <reaction evidence="12">
        <text>L-threonyl-[protein] + ATP = O-phospho-L-threonyl-[protein] + ADP + H(+)</text>
        <dbReference type="Rhea" id="RHEA:46608"/>
        <dbReference type="Rhea" id="RHEA-COMP:11060"/>
        <dbReference type="Rhea" id="RHEA-COMP:11605"/>
        <dbReference type="ChEBI" id="CHEBI:15378"/>
        <dbReference type="ChEBI" id="CHEBI:30013"/>
        <dbReference type="ChEBI" id="CHEBI:30616"/>
        <dbReference type="ChEBI" id="CHEBI:61977"/>
        <dbReference type="ChEBI" id="CHEBI:456216"/>
        <dbReference type="EC" id="2.7.11.24"/>
    </reaction>
    <physiologicalReaction direction="left-to-right" evidence="3">
        <dbReference type="Rhea" id="RHEA:46609"/>
    </physiologicalReaction>
</comment>
<comment type="cofactor">
    <cofactor evidence="12">
        <name>Mg(2+)</name>
        <dbReference type="ChEBI" id="CHEBI:18420"/>
    </cofactor>
</comment>
<comment type="activity regulation">
    <text evidence="3">Activated by threonine and tyrosine phosphorylation.</text>
</comment>
<comment type="subunit">
    <text evidence="10">Interacts with the fumiquinazoline C biosynthesis cluster nonribosomal peptide synthetases fmqA and fmqC.</text>
</comment>
<comment type="subcellular location">
    <subcellularLocation>
        <location evidence="7">Nucleus</location>
    </subcellularLocation>
    <text evidence="7">Accumulates in the nucleus under iron depletion conditions.</text>
</comment>
<comment type="induction">
    <text evidence="5">Expression is induced by cell wall integrity inhibitors such as glucanex, SDS, congo red and caffeine.</text>
</comment>
<comment type="PTM">
    <text evidence="5 7 8">Phosphorylated during cell wall stress by the upstream MAPKK mkk2 (PubMed:17981060). Iron starvation triggers phosphorylation and thus activation of mpkA (PubMed:21883519). Phosphorylation increases upon osmotic stress and cell wall damage and depends on mpkC and sakA (PubMed:26878695).</text>
</comment>
<comment type="disruption phenotype">
    <text evidence="5 6 7 10">Leads to the formation of thicker hyphae, which appear less elongated and form more branched hyphae (PubMed:17981060, PubMed:19715768). Increases sensitivity to diamide and menadione but shows increased tolerance against H(2)O(2) (PubMed:17981060). Results also in increased sensitivity to cell wall integrity inhibitors such as glucanex, SDS, congo red and calcofluor white (PubMed:19715768). Affects the expression of genes involved in cell wall remodeling, protection against ROS, secondary metabolism such as gliotoxin, pyomelanin and pseurotin A, as well as genes involved in siderophore biosynthesis (PubMed:21883519). Also affects the expression of fumiquinazoline C biosynthesis cluster genes (PubMed:33705521). Does not affect the formation of conidiophores and conidia, nor the germination of aconidia (PubMed:17981060). Does not affect the virulence in a low dose murine infection model (PubMed:17981060).</text>
</comment>
<comment type="similarity">
    <text evidence="1">Belongs to the protein kinase superfamily. Ser/Thr protein kinase family.</text>
</comment>
<evidence type="ECO:0000255" key="1">
    <source>
        <dbReference type="PROSITE-ProRule" id="PRU00159"/>
    </source>
</evidence>
<evidence type="ECO:0000255" key="2">
    <source>
        <dbReference type="PROSITE-ProRule" id="PRU10027"/>
    </source>
</evidence>
<evidence type="ECO:0000255" key="3">
    <source>
        <dbReference type="RuleBase" id="RU361165"/>
    </source>
</evidence>
<evidence type="ECO:0000256" key="4">
    <source>
        <dbReference type="SAM" id="MobiDB-lite"/>
    </source>
</evidence>
<evidence type="ECO:0000269" key="5">
    <source>
    </source>
</evidence>
<evidence type="ECO:0000269" key="6">
    <source>
    </source>
</evidence>
<evidence type="ECO:0000269" key="7">
    <source>
    </source>
</evidence>
<evidence type="ECO:0000269" key="8">
    <source>
    </source>
</evidence>
<evidence type="ECO:0000269" key="9">
    <source>
    </source>
</evidence>
<evidence type="ECO:0000269" key="10">
    <source>
    </source>
</evidence>
<evidence type="ECO:0000303" key="11">
    <source>
    </source>
</evidence>
<evidence type="ECO:0000305" key="12">
    <source>
    </source>
</evidence>
<organism>
    <name type="scientific">Aspergillus fumigatus (strain CBS 144.89 / FGSC A1163 / CEA10)</name>
    <name type="common">Neosartorya fumigata</name>
    <dbReference type="NCBI Taxonomy" id="451804"/>
    <lineage>
        <taxon>Eukaryota</taxon>
        <taxon>Fungi</taxon>
        <taxon>Dikarya</taxon>
        <taxon>Ascomycota</taxon>
        <taxon>Pezizomycotina</taxon>
        <taxon>Eurotiomycetes</taxon>
        <taxon>Eurotiomycetidae</taxon>
        <taxon>Eurotiales</taxon>
        <taxon>Aspergillaceae</taxon>
        <taxon>Aspergillus</taxon>
        <taxon>Aspergillus subgen. Fumigati</taxon>
    </lineage>
</organism>